<gene>
    <name evidence="1" type="primary">ldh</name>
    <name type="ordered locus">Dvul_2352</name>
</gene>
<evidence type="ECO:0000255" key="1">
    <source>
        <dbReference type="HAMAP-Rule" id="MF_00488"/>
    </source>
</evidence>
<keyword id="KW-0021">Allosteric enzyme</keyword>
<keyword id="KW-0963">Cytoplasm</keyword>
<keyword id="KW-0520">NAD</keyword>
<keyword id="KW-0560">Oxidoreductase</keyword>
<keyword id="KW-0597">Phosphoprotein</keyword>
<organism>
    <name type="scientific">Nitratidesulfovibrio vulgaris (strain DP4)</name>
    <name type="common">Desulfovibrio vulgaris</name>
    <dbReference type="NCBI Taxonomy" id="391774"/>
    <lineage>
        <taxon>Bacteria</taxon>
        <taxon>Pseudomonadati</taxon>
        <taxon>Thermodesulfobacteriota</taxon>
        <taxon>Desulfovibrionia</taxon>
        <taxon>Desulfovibrionales</taxon>
        <taxon>Desulfovibrionaceae</taxon>
        <taxon>Nitratidesulfovibrio</taxon>
    </lineage>
</organism>
<accession>A1VG02</accession>
<dbReference type="EC" id="1.1.1.27" evidence="1"/>
<dbReference type="EMBL" id="CP000527">
    <property type="protein sequence ID" value="ABM29368.1"/>
    <property type="molecule type" value="Genomic_DNA"/>
</dbReference>
<dbReference type="RefSeq" id="WP_010937903.1">
    <property type="nucleotide sequence ID" value="NC_008751.1"/>
</dbReference>
<dbReference type="SMR" id="A1VG02"/>
<dbReference type="KEGG" id="dvl:Dvul_2352"/>
<dbReference type="HOGENOM" id="CLU_045401_1_1_7"/>
<dbReference type="UniPathway" id="UPA00554">
    <property type="reaction ID" value="UER00611"/>
</dbReference>
<dbReference type="Proteomes" id="UP000009173">
    <property type="component" value="Chromosome"/>
</dbReference>
<dbReference type="GO" id="GO:0005737">
    <property type="term" value="C:cytoplasm"/>
    <property type="evidence" value="ECO:0007669"/>
    <property type="project" value="UniProtKB-SubCell"/>
</dbReference>
<dbReference type="GO" id="GO:0004459">
    <property type="term" value="F:L-lactate dehydrogenase activity"/>
    <property type="evidence" value="ECO:0007669"/>
    <property type="project" value="UniProtKB-UniRule"/>
</dbReference>
<dbReference type="GO" id="GO:0006096">
    <property type="term" value="P:glycolytic process"/>
    <property type="evidence" value="ECO:0007669"/>
    <property type="project" value="UniProtKB-UniRule"/>
</dbReference>
<dbReference type="GO" id="GO:0006089">
    <property type="term" value="P:lactate metabolic process"/>
    <property type="evidence" value="ECO:0007669"/>
    <property type="project" value="TreeGrafter"/>
</dbReference>
<dbReference type="CDD" id="cd05292">
    <property type="entry name" value="LDH_2"/>
    <property type="match status" value="1"/>
</dbReference>
<dbReference type="Gene3D" id="3.90.110.10">
    <property type="entry name" value="Lactate dehydrogenase/glycoside hydrolase, family 4, C-terminal"/>
    <property type="match status" value="1"/>
</dbReference>
<dbReference type="Gene3D" id="3.40.50.720">
    <property type="entry name" value="NAD(P)-binding Rossmann-like Domain"/>
    <property type="match status" value="1"/>
</dbReference>
<dbReference type="HAMAP" id="MF_00488">
    <property type="entry name" value="Lactate_dehydrog"/>
    <property type="match status" value="1"/>
</dbReference>
<dbReference type="InterPro" id="IPR001557">
    <property type="entry name" value="L-lactate/malate_DH"/>
</dbReference>
<dbReference type="InterPro" id="IPR011304">
    <property type="entry name" value="L-lactate_DH"/>
</dbReference>
<dbReference type="InterPro" id="IPR018177">
    <property type="entry name" value="L-lactate_DH_AS"/>
</dbReference>
<dbReference type="InterPro" id="IPR022383">
    <property type="entry name" value="Lactate/malate_DH_C"/>
</dbReference>
<dbReference type="InterPro" id="IPR001236">
    <property type="entry name" value="Lactate/malate_DH_N"/>
</dbReference>
<dbReference type="InterPro" id="IPR015955">
    <property type="entry name" value="Lactate_DH/Glyco_Ohase_4_C"/>
</dbReference>
<dbReference type="InterPro" id="IPR036291">
    <property type="entry name" value="NAD(P)-bd_dom_sf"/>
</dbReference>
<dbReference type="NCBIfam" id="TIGR01771">
    <property type="entry name" value="L-LDH-NAD"/>
    <property type="match status" value="1"/>
</dbReference>
<dbReference type="NCBIfam" id="NF000824">
    <property type="entry name" value="PRK00066.1"/>
    <property type="match status" value="1"/>
</dbReference>
<dbReference type="PANTHER" id="PTHR43128">
    <property type="entry name" value="L-2-HYDROXYCARBOXYLATE DEHYDROGENASE (NAD(P)(+))"/>
    <property type="match status" value="1"/>
</dbReference>
<dbReference type="PANTHER" id="PTHR43128:SF16">
    <property type="entry name" value="L-LACTATE DEHYDROGENASE"/>
    <property type="match status" value="1"/>
</dbReference>
<dbReference type="Pfam" id="PF02866">
    <property type="entry name" value="Ldh_1_C"/>
    <property type="match status" value="1"/>
</dbReference>
<dbReference type="Pfam" id="PF00056">
    <property type="entry name" value="Ldh_1_N"/>
    <property type="match status" value="1"/>
</dbReference>
<dbReference type="PIRSF" id="PIRSF000102">
    <property type="entry name" value="Lac_mal_DH"/>
    <property type="match status" value="1"/>
</dbReference>
<dbReference type="PRINTS" id="PR00086">
    <property type="entry name" value="LLDHDRGNASE"/>
</dbReference>
<dbReference type="SUPFAM" id="SSF56327">
    <property type="entry name" value="LDH C-terminal domain-like"/>
    <property type="match status" value="1"/>
</dbReference>
<dbReference type="SUPFAM" id="SSF51735">
    <property type="entry name" value="NAD(P)-binding Rossmann-fold domains"/>
    <property type="match status" value="1"/>
</dbReference>
<dbReference type="PROSITE" id="PS00064">
    <property type="entry name" value="L_LDH"/>
    <property type="match status" value="1"/>
</dbReference>
<proteinExistence type="inferred from homology"/>
<reference key="1">
    <citation type="journal article" date="2009" name="Environ. Microbiol.">
        <title>Contribution of mobile genetic elements to Desulfovibrio vulgaris genome plasticity.</title>
        <authorList>
            <person name="Walker C.B."/>
            <person name="Stolyar S."/>
            <person name="Chivian D."/>
            <person name="Pinel N."/>
            <person name="Gabster J.A."/>
            <person name="Dehal P.S."/>
            <person name="He Z."/>
            <person name="Yang Z.K."/>
            <person name="Yen H.C."/>
            <person name="Zhou J."/>
            <person name="Wall J.D."/>
            <person name="Hazen T.C."/>
            <person name="Arkin A.P."/>
            <person name="Stahl D.A."/>
        </authorList>
    </citation>
    <scope>NUCLEOTIDE SEQUENCE [LARGE SCALE GENOMIC DNA]</scope>
    <source>
        <strain>DP4</strain>
    </source>
</reference>
<comment type="function">
    <text evidence="1">Catalyzes the conversion of lactate to pyruvate.</text>
</comment>
<comment type="catalytic activity">
    <reaction evidence="1">
        <text>(S)-lactate + NAD(+) = pyruvate + NADH + H(+)</text>
        <dbReference type="Rhea" id="RHEA:23444"/>
        <dbReference type="ChEBI" id="CHEBI:15361"/>
        <dbReference type="ChEBI" id="CHEBI:15378"/>
        <dbReference type="ChEBI" id="CHEBI:16651"/>
        <dbReference type="ChEBI" id="CHEBI:57540"/>
        <dbReference type="ChEBI" id="CHEBI:57945"/>
        <dbReference type="EC" id="1.1.1.27"/>
    </reaction>
</comment>
<comment type="activity regulation">
    <text evidence="1">Allosterically activated by fructose 1,6-bisphosphate (FBP).</text>
</comment>
<comment type="pathway">
    <text evidence="1">Fermentation; pyruvate fermentation to lactate; (S)-lactate from pyruvate: step 1/1.</text>
</comment>
<comment type="subunit">
    <text evidence="1">Homotetramer.</text>
</comment>
<comment type="subcellular location">
    <subcellularLocation>
        <location evidence="1">Cytoplasm</location>
    </subcellularLocation>
</comment>
<comment type="similarity">
    <text evidence="1">Belongs to the LDH/MDH superfamily. LDH family.</text>
</comment>
<feature type="chain" id="PRO_1000026504" description="L-lactate dehydrogenase">
    <location>
        <begin position="1"/>
        <end position="309"/>
    </location>
</feature>
<feature type="active site" description="Proton acceptor" evidence="1">
    <location>
        <position position="173"/>
    </location>
</feature>
<feature type="binding site" evidence="1">
    <location>
        <position position="12"/>
    </location>
    <ligand>
        <name>NAD(+)</name>
        <dbReference type="ChEBI" id="CHEBI:57540"/>
    </ligand>
</feature>
<feature type="binding site" evidence="1">
    <location>
        <position position="33"/>
    </location>
    <ligand>
        <name>NAD(+)</name>
        <dbReference type="ChEBI" id="CHEBI:57540"/>
    </ligand>
</feature>
<feature type="binding site" evidence="1">
    <location>
        <position position="38"/>
    </location>
    <ligand>
        <name>NAD(+)</name>
        <dbReference type="ChEBI" id="CHEBI:57540"/>
    </ligand>
</feature>
<feature type="binding site" evidence="1">
    <location>
        <position position="63"/>
    </location>
    <ligand>
        <name>NAD(+)</name>
        <dbReference type="ChEBI" id="CHEBI:57540"/>
    </ligand>
</feature>
<feature type="binding site" evidence="1">
    <location>
        <begin position="77"/>
        <end position="78"/>
    </location>
    <ligand>
        <name>NAD(+)</name>
        <dbReference type="ChEBI" id="CHEBI:57540"/>
    </ligand>
</feature>
<feature type="binding site" evidence="1">
    <location>
        <position position="80"/>
    </location>
    <ligand>
        <name>substrate</name>
    </ligand>
</feature>
<feature type="binding site" evidence="1">
    <location>
        <position position="86"/>
    </location>
    <ligand>
        <name>substrate</name>
    </ligand>
</feature>
<feature type="binding site" evidence="1">
    <location>
        <begin position="116"/>
        <end position="118"/>
    </location>
    <ligand>
        <name>NAD(+)</name>
        <dbReference type="ChEBI" id="CHEBI:57540"/>
    </ligand>
</feature>
<feature type="binding site" evidence="1">
    <location>
        <begin position="118"/>
        <end position="121"/>
    </location>
    <ligand>
        <name>substrate</name>
    </ligand>
</feature>
<feature type="binding site" evidence="1">
    <location>
        <position position="141"/>
    </location>
    <ligand>
        <name>NAD(+)</name>
        <dbReference type="ChEBI" id="CHEBI:57540"/>
    </ligand>
</feature>
<feature type="binding site" evidence="1">
    <location>
        <begin position="146"/>
        <end position="149"/>
    </location>
    <ligand>
        <name>substrate</name>
    </ligand>
</feature>
<feature type="binding site" evidence="1">
    <location>
        <position position="151"/>
    </location>
    <ligand>
        <name>beta-D-fructose 1,6-bisphosphate</name>
        <dbReference type="ChEBI" id="CHEBI:32966"/>
        <note>allosteric activator</note>
    </ligand>
</feature>
<feature type="binding site" evidence="1">
    <location>
        <position position="166"/>
    </location>
    <ligand>
        <name>beta-D-fructose 1,6-bisphosphate</name>
        <dbReference type="ChEBI" id="CHEBI:32966"/>
        <note>allosteric activator</note>
    </ligand>
</feature>
<feature type="binding site" evidence="1">
    <location>
        <position position="228"/>
    </location>
    <ligand>
        <name>substrate</name>
    </ligand>
</feature>
<feature type="modified residue" description="Phosphotyrosine" evidence="1">
    <location>
        <position position="219"/>
    </location>
</feature>
<protein>
    <recommendedName>
        <fullName evidence="1">L-lactate dehydrogenase</fullName>
        <shortName evidence="1">L-LDH</shortName>
        <ecNumber evidence="1">1.1.1.27</ecNumber>
    </recommendedName>
</protein>
<name>LDH_NITV4</name>
<sequence length="309" mass="32213">MNRIAVIGVGNVGMAFAYAAAIKRLANDIVLIDANAARAEGESMDLADAMALVGPVQIRSGGYEQCEGARIVVVTAGAKQMPGQSRLDLVRVNAGITRDILTAVMQYADDPLYIMATNPVDVLTHVARTVTGVAPGRVIGSGTVLDSARFRGHVAEILGVDVRGVHAHIVGEHGDSEVALWSRANVSGIPVAEMCARRGIAYDAAFREKALGHVRHAAYEIIGRKGATGYGIGMSLCRIVEAILHDEHSVLTVSCPVAGHYGLGDVSLSLPCVIGSDGIEEVLDAPIAEDEQAALAASARVLGEHLAAL</sequence>